<name>TRMA_SALA4</name>
<proteinExistence type="inferred from homology"/>
<gene>
    <name evidence="1" type="primary">trmA</name>
    <name type="ordered locus">SeAg_B4370</name>
</gene>
<comment type="function">
    <text evidence="1">Dual-specificity methyltransferase that catalyzes the formation of 5-methyluridine at position 54 (m5U54) in all tRNAs, and that of position 341 (m5U341) in tmRNA (transfer-mRNA).</text>
</comment>
<comment type="catalytic activity">
    <reaction evidence="1">
        <text>uridine(54) in tRNA + S-adenosyl-L-methionine = 5-methyluridine(54) in tRNA + S-adenosyl-L-homocysteine + H(+)</text>
        <dbReference type="Rhea" id="RHEA:42712"/>
        <dbReference type="Rhea" id="RHEA-COMP:10167"/>
        <dbReference type="Rhea" id="RHEA-COMP:10193"/>
        <dbReference type="ChEBI" id="CHEBI:15378"/>
        <dbReference type="ChEBI" id="CHEBI:57856"/>
        <dbReference type="ChEBI" id="CHEBI:59789"/>
        <dbReference type="ChEBI" id="CHEBI:65315"/>
        <dbReference type="ChEBI" id="CHEBI:74447"/>
        <dbReference type="EC" id="2.1.1.35"/>
    </reaction>
</comment>
<comment type="catalytic activity">
    <reaction evidence="1">
        <text>uridine(341) in tmRNA + S-adenosyl-L-methionine = 5-methyluridine(341) in tmRNA + S-adenosyl-L-homocysteine + H(+)</text>
        <dbReference type="Rhea" id="RHEA:43612"/>
        <dbReference type="Rhea" id="RHEA-COMP:10630"/>
        <dbReference type="Rhea" id="RHEA-COMP:10631"/>
        <dbReference type="ChEBI" id="CHEBI:15378"/>
        <dbReference type="ChEBI" id="CHEBI:57856"/>
        <dbReference type="ChEBI" id="CHEBI:59789"/>
        <dbReference type="ChEBI" id="CHEBI:65315"/>
        <dbReference type="ChEBI" id="CHEBI:74447"/>
    </reaction>
</comment>
<comment type="similarity">
    <text evidence="1">Belongs to the class I-like SAM-binding methyltransferase superfamily. RNA M5U methyltransferase family. TrmA subfamily.</text>
</comment>
<protein>
    <recommendedName>
        <fullName evidence="1">tRNA/tmRNA (uracil-C(5))-methyltransferase</fullName>
        <ecNumber evidence="1">2.1.1.-</ecNumber>
        <ecNumber evidence="1">2.1.1.35</ecNumber>
    </recommendedName>
    <alternativeName>
        <fullName evidence="1">tRNA (uracil(54)-C(5))-methyltransferase</fullName>
    </alternativeName>
    <alternativeName>
        <fullName evidence="1">tRNA(m5U54)-methyltransferase</fullName>
        <shortName evidence="1">RUMT</shortName>
    </alternativeName>
    <alternativeName>
        <fullName evidence="1">tmRNA (uracil(341)-C(5))-methyltransferase</fullName>
    </alternativeName>
</protein>
<keyword id="KW-0489">Methyltransferase</keyword>
<keyword id="KW-0949">S-adenosyl-L-methionine</keyword>
<keyword id="KW-0808">Transferase</keyword>
<keyword id="KW-0819">tRNA processing</keyword>
<feature type="chain" id="PRO_1000198550" description="tRNA/tmRNA (uracil-C(5))-methyltransferase">
    <location>
        <begin position="1"/>
        <end position="366"/>
    </location>
</feature>
<feature type="active site" description="Nucleophile" evidence="1">
    <location>
        <position position="324"/>
    </location>
</feature>
<feature type="active site" description="Proton acceptor" evidence="1">
    <location>
        <position position="358"/>
    </location>
</feature>
<feature type="binding site" evidence="1">
    <location>
        <position position="190"/>
    </location>
    <ligand>
        <name>S-adenosyl-L-methionine</name>
        <dbReference type="ChEBI" id="CHEBI:59789"/>
    </ligand>
</feature>
<feature type="binding site" evidence="1">
    <location>
        <position position="218"/>
    </location>
    <ligand>
        <name>S-adenosyl-L-methionine</name>
        <dbReference type="ChEBI" id="CHEBI:59789"/>
    </ligand>
</feature>
<feature type="binding site" evidence="1">
    <location>
        <position position="223"/>
    </location>
    <ligand>
        <name>S-adenosyl-L-methionine</name>
        <dbReference type="ChEBI" id="CHEBI:59789"/>
    </ligand>
</feature>
<feature type="binding site" evidence="1">
    <location>
        <position position="239"/>
    </location>
    <ligand>
        <name>S-adenosyl-L-methionine</name>
        <dbReference type="ChEBI" id="CHEBI:59789"/>
    </ligand>
</feature>
<feature type="binding site" evidence="1">
    <location>
        <position position="299"/>
    </location>
    <ligand>
        <name>S-adenosyl-L-methionine</name>
        <dbReference type="ChEBI" id="CHEBI:59789"/>
    </ligand>
</feature>
<sequence length="366" mass="41897">MTPEHLPTEQYEAQLAEKVARLQSMMAPFSGLVPEVFRSPVSHYRMRAEFRLWHDGDDLYHIMFDQQTKSRIRVDTFPAASQLINTLMKAMIAGVRDNHALRHKLFQIDYLTTLSNQAVVSLLYHKKLDEEWREAATALRDALRAQGLNVHLIGRATKTKIELDQDYIDERLPVAGKEMIYRQVENSFTQPNAAMNIQMLEWALEVTKDSKGDLLELYCGNGNFSLALARNFDRVLATEIAKPSVAAAQYNIAANHIDNVQIIRMAAEEFTQAMNGVREFNRLQGIDLKRYQCETIFVDPPRSGLDSETEKMVQAYPRILYISCNPETLCKNLETLSQTHTVSRLALFDQFPYTHHMECGVLLTAR</sequence>
<accession>B5F0V3</accession>
<organism>
    <name type="scientific">Salmonella agona (strain SL483)</name>
    <dbReference type="NCBI Taxonomy" id="454166"/>
    <lineage>
        <taxon>Bacteria</taxon>
        <taxon>Pseudomonadati</taxon>
        <taxon>Pseudomonadota</taxon>
        <taxon>Gammaproteobacteria</taxon>
        <taxon>Enterobacterales</taxon>
        <taxon>Enterobacteriaceae</taxon>
        <taxon>Salmonella</taxon>
    </lineage>
</organism>
<reference key="1">
    <citation type="journal article" date="2011" name="J. Bacteriol.">
        <title>Comparative genomics of 28 Salmonella enterica isolates: evidence for CRISPR-mediated adaptive sublineage evolution.</title>
        <authorList>
            <person name="Fricke W.F."/>
            <person name="Mammel M.K."/>
            <person name="McDermott P.F."/>
            <person name="Tartera C."/>
            <person name="White D.G."/>
            <person name="Leclerc J.E."/>
            <person name="Ravel J."/>
            <person name="Cebula T.A."/>
        </authorList>
    </citation>
    <scope>NUCLEOTIDE SEQUENCE [LARGE SCALE GENOMIC DNA]</scope>
    <source>
        <strain>SL483</strain>
    </source>
</reference>
<dbReference type="EC" id="2.1.1.-" evidence="1"/>
<dbReference type="EC" id="2.1.1.35" evidence="1"/>
<dbReference type="EMBL" id="CP001138">
    <property type="protein sequence ID" value="ACH51055.1"/>
    <property type="molecule type" value="Genomic_DNA"/>
</dbReference>
<dbReference type="RefSeq" id="WP_000186979.1">
    <property type="nucleotide sequence ID" value="NC_011149.1"/>
</dbReference>
<dbReference type="SMR" id="B5F0V3"/>
<dbReference type="KEGG" id="sea:SeAg_B4370"/>
<dbReference type="HOGENOM" id="CLU_043022_0_0_6"/>
<dbReference type="Proteomes" id="UP000008819">
    <property type="component" value="Chromosome"/>
</dbReference>
<dbReference type="GO" id="GO:0005829">
    <property type="term" value="C:cytosol"/>
    <property type="evidence" value="ECO:0007669"/>
    <property type="project" value="TreeGrafter"/>
</dbReference>
<dbReference type="GO" id="GO:0019843">
    <property type="term" value="F:rRNA binding"/>
    <property type="evidence" value="ECO:0007669"/>
    <property type="project" value="TreeGrafter"/>
</dbReference>
<dbReference type="GO" id="GO:0030697">
    <property type="term" value="F:tRNA (uracil(54)-C5)-methyltransferase activity, S-adenosyl methionine-dependent"/>
    <property type="evidence" value="ECO:0007669"/>
    <property type="project" value="UniProtKB-UniRule"/>
</dbReference>
<dbReference type="GO" id="GO:0000049">
    <property type="term" value="F:tRNA binding"/>
    <property type="evidence" value="ECO:0007669"/>
    <property type="project" value="TreeGrafter"/>
</dbReference>
<dbReference type="GO" id="GO:0030488">
    <property type="term" value="P:tRNA methylation"/>
    <property type="evidence" value="ECO:0007669"/>
    <property type="project" value="UniProtKB-UniRule"/>
</dbReference>
<dbReference type="CDD" id="cd02440">
    <property type="entry name" value="AdoMet_MTases"/>
    <property type="match status" value="1"/>
</dbReference>
<dbReference type="FunFam" id="2.40.50.1070:FF:000001">
    <property type="entry name" value="tRNA/tmRNA (uracil-C(5))-methyltransferase"/>
    <property type="match status" value="1"/>
</dbReference>
<dbReference type="FunFam" id="3.40.50.150:FF:000012">
    <property type="entry name" value="tRNA/tmRNA (uracil-C(5))-methyltransferase"/>
    <property type="match status" value="1"/>
</dbReference>
<dbReference type="Gene3D" id="2.40.50.1070">
    <property type="match status" value="1"/>
</dbReference>
<dbReference type="Gene3D" id="3.40.50.150">
    <property type="entry name" value="Vaccinia Virus protein VP39"/>
    <property type="match status" value="1"/>
</dbReference>
<dbReference type="HAMAP" id="MF_01011">
    <property type="entry name" value="RNA_methyltr_TrmA"/>
    <property type="match status" value="1"/>
</dbReference>
<dbReference type="InterPro" id="IPR030390">
    <property type="entry name" value="MeTrfase_TrmA_AS"/>
</dbReference>
<dbReference type="InterPro" id="IPR030391">
    <property type="entry name" value="MeTrfase_TrmA_CS"/>
</dbReference>
<dbReference type="InterPro" id="IPR029063">
    <property type="entry name" value="SAM-dependent_MTases_sf"/>
</dbReference>
<dbReference type="InterPro" id="IPR011869">
    <property type="entry name" value="TrmA_MeTrfase"/>
</dbReference>
<dbReference type="InterPro" id="IPR010280">
    <property type="entry name" value="U5_MeTrfase_fam"/>
</dbReference>
<dbReference type="NCBIfam" id="TIGR02143">
    <property type="entry name" value="trmA_only"/>
    <property type="match status" value="1"/>
</dbReference>
<dbReference type="PANTHER" id="PTHR47790">
    <property type="entry name" value="TRNA/TMRNA (URACIL-C(5))-METHYLTRANSFERASE"/>
    <property type="match status" value="1"/>
</dbReference>
<dbReference type="PANTHER" id="PTHR47790:SF2">
    <property type="entry name" value="TRNA_TMRNA (URACIL-C(5))-METHYLTRANSFERASE"/>
    <property type="match status" value="1"/>
</dbReference>
<dbReference type="Pfam" id="PF05958">
    <property type="entry name" value="tRNA_U5-meth_tr"/>
    <property type="match status" value="1"/>
</dbReference>
<dbReference type="SUPFAM" id="SSF53335">
    <property type="entry name" value="S-adenosyl-L-methionine-dependent methyltransferases"/>
    <property type="match status" value="1"/>
</dbReference>
<dbReference type="PROSITE" id="PS51687">
    <property type="entry name" value="SAM_MT_RNA_M5U"/>
    <property type="match status" value="1"/>
</dbReference>
<dbReference type="PROSITE" id="PS01230">
    <property type="entry name" value="TRMA_1"/>
    <property type="match status" value="1"/>
</dbReference>
<dbReference type="PROSITE" id="PS01231">
    <property type="entry name" value="TRMA_2"/>
    <property type="match status" value="1"/>
</dbReference>
<evidence type="ECO:0000255" key="1">
    <source>
        <dbReference type="HAMAP-Rule" id="MF_01011"/>
    </source>
</evidence>